<evidence type="ECO:0000255" key="1">
    <source>
        <dbReference type="HAMAP-Rule" id="MF_00130"/>
    </source>
</evidence>
<organism>
    <name type="scientific">Lacticaseibacillus casei (strain BL23)</name>
    <name type="common">Lactobacillus casei</name>
    <dbReference type="NCBI Taxonomy" id="543734"/>
    <lineage>
        <taxon>Bacteria</taxon>
        <taxon>Bacillati</taxon>
        <taxon>Bacillota</taxon>
        <taxon>Bacilli</taxon>
        <taxon>Lactobacillales</taxon>
        <taxon>Lactobacillaceae</taxon>
        <taxon>Lacticaseibacillus</taxon>
    </lineage>
</organism>
<feature type="chain" id="PRO_1000095675" description="Holliday junction resolvase RecU">
    <location>
        <begin position="1"/>
        <end position="208"/>
    </location>
</feature>
<feature type="binding site" evidence="1">
    <location>
        <position position="86"/>
    </location>
    <ligand>
        <name>Mg(2+)</name>
        <dbReference type="ChEBI" id="CHEBI:18420"/>
    </ligand>
</feature>
<feature type="binding site" evidence="1">
    <location>
        <position position="88"/>
    </location>
    <ligand>
        <name>Mg(2+)</name>
        <dbReference type="ChEBI" id="CHEBI:18420"/>
    </ligand>
</feature>
<feature type="binding site" evidence="1">
    <location>
        <position position="101"/>
    </location>
    <ligand>
        <name>Mg(2+)</name>
        <dbReference type="ChEBI" id="CHEBI:18420"/>
    </ligand>
</feature>
<feature type="binding site" evidence="1">
    <location>
        <position position="120"/>
    </location>
    <ligand>
        <name>Mg(2+)</name>
        <dbReference type="ChEBI" id="CHEBI:18420"/>
    </ligand>
</feature>
<feature type="site" description="Transition state stabilizer" evidence="1">
    <location>
        <position position="103"/>
    </location>
</feature>
<dbReference type="EC" id="3.1.21.10" evidence="1"/>
<dbReference type="EMBL" id="FM177140">
    <property type="protein sequence ID" value="CAQ66783.1"/>
    <property type="molecule type" value="Genomic_DNA"/>
</dbReference>
<dbReference type="SMR" id="B3WEI2"/>
<dbReference type="KEGG" id="lcb:LCABL_17020"/>
<dbReference type="HOGENOM" id="CLU_096340_0_0_9"/>
<dbReference type="GO" id="GO:0005737">
    <property type="term" value="C:cytoplasm"/>
    <property type="evidence" value="ECO:0007669"/>
    <property type="project" value="UniProtKB-SubCell"/>
</dbReference>
<dbReference type="GO" id="GO:0004519">
    <property type="term" value="F:endonuclease activity"/>
    <property type="evidence" value="ECO:0007669"/>
    <property type="project" value="UniProtKB-UniRule"/>
</dbReference>
<dbReference type="GO" id="GO:0000287">
    <property type="term" value="F:magnesium ion binding"/>
    <property type="evidence" value="ECO:0007669"/>
    <property type="project" value="UniProtKB-UniRule"/>
</dbReference>
<dbReference type="GO" id="GO:0003676">
    <property type="term" value="F:nucleic acid binding"/>
    <property type="evidence" value="ECO:0007669"/>
    <property type="project" value="InterPro"/>
</dbReference>
<dbReference type="GO" id="GO:0007059">
    <property type="term" value="P:chromosome segregation"/>
    <property type="evidence" value="ECO:0007669"/>
    <property type="project" value="UniProtKB-UniRule"/>
</dbReference>
<dbReference type="GO" id="GO:0006310">
    <property type="term" value="P:DNA recombination"/>
    <property type="evidence" value="ECO:0007669"/>
    <property type="project" value="UniProtKB-UniRule"/>
</dbReference>
<dbReference type="GO" id="GO:0006281">
    <property type="term" value="P:DNA repair"/>
    <property type="evidence" value="ECO:0007669"/>
    <property type="project" value="UniProtKB-UniRule"/>
</dbReference>
<dbReference type="CDD" id="cd22354">
    <property type="entry name" value="RecU-like"/>
    <property type="match status" value="1"/>
</dbReference>
<dbReference type="Gene3D" id="3.40.1350.10">
    <property type="match status" value="1"/>
</dbReference>
<dbReference type="HAMAP" id="MF_00130">
    <property type="entry name" value="RecU"/>
    <property type="match status" value="1"/>
</dbReference>
<dbReference type="InterPro" id="IPR004612">
    <property type="entry name" value="Resolv_RecU"/>
</dbReference>
<dbReference type="InterPro" id="IPR011335">
    <property type="entry name" value="Restrct_endonuc-II-like"/>
</dbReference>
<dbReference type="InterPro" id="IPR011856">
    <property type="entry name" value="tRNA_endonuc-like_dom_sf"/>
</dbReference>
<dbReference type="NCBIfam" id="NF002584">
    <property type="entry name" value="PRK02234.1-5"/>
    <property type="match status" value="1"/>
</dbReference>
<dbReference type="NCBIfam" id="TIGR00648">
    <property type="entry name" value="recU"/>
    <property type="match status" value="1"/>
</dbReference>
<dbReference type="Pfam" id="PF03838">
    <property type="entry name" value="RecU"/>
    <property type="match status" value="1"/>
</dbReference>
<dbReference type="PIRSF" id="PIRSF037785">
    <property type="entry name" value="RecU"/>
    <property type="match status" value="1"/>
</dbReference>
<dbReference type="SUPFAM" id="SSF52980">
    <property type="entry name" value="Restriction endonuclease-like"/>
    <property type="match status" value="1"/>
</dbReference>
<sequence>MTIHYPNGNPYKDGTQFSSQAISRPTIYGGRGMTLEEELNISNQYYRSIDKAVVYKKPTPVQIVKVDYPKRSQAVIREAYFKTPSTTDYNGVYRGFYLDFEAKETKNKASFPLKNFHQHQIEHFRRCLKQSGICFVVIRFATLKRLFVFPAGRLIDCWDRQPDGGRKSIPLKDIVTNGFELHPQLQPVIPFLDGVDWLIETKVGNVRG</sequence>
<protein>
    <recommendedName>
        <fullName evidence="1">Holliday junction resolvase RecU</fullName>
        <ecNumber evidence="1">3.1.21.10</ecNumber>
    </recommendedName>
    <alternativeName>
        <fullName evidence="1">Recombination protein U homolog</fullName>
    </alternativeName>
</protein>
<proteinExistence type="inferred from homology"/>
<gene>
    <name evidence="1" type="primary">recU</name>
    <name type="ordered locus">LCABL_17020</name>
</gene>
<comment type="function">
    <text evidence="1">Endonuclease that resolves Holliday junction intermediates in genetic recombination. Cleaves mobile four-strand junctions by introducing symmetrical nicks in paired strands. Promotes annealing of linear ssDNA with homologous dsDNA. Required for DNA repair, homologous recombination and chromosome segregation.</text>
</comment>
<comment type="catalytic activity">
    <reaction evidence="1">
        <text>Endonucleolytic cleavage at a junction such as a reciprocal single-stranded crossover between two homologous DNA duplexes (Holliday junction).</text>
        <dbReference type="EC" id="3.1.21.10"/>
    </reaction>
</comment>
<comment type="cofactor">
    <cofactor evidence="1">
        <name>Mg(2+)</name>
        <dbReference type="ChEBI" id="CHEBI:18420"/>
    </cofactor>
    <text evidence="1">Binds 1 Mg(2+) ion per subunit.</text>
</comment>
<comment type="subcellular location">
    <subcellularLocation>
        <location evidence="1">Cytoplasm</location>
    </subcellularLocation>
</comment>
<comment type="similarity">
    <text evidence="1">Belongs to the RecU family.</text>
</comment>
<name>RECU_LACCB</name>
<reference key="1">
    <citation type="submission" date="2008-06" db="EMBL/GenBank/DDBJ databases">
        <title>Lactobacillus casei BL23 complete genome sequence.</title>
        <authorList>
            <person name="Maze A."/>
            <person name="Boel G."/>
            <person name="Bourand A."/>
            <person name="Loux V."/>
            <person name="Gibrat J.F."/>
            <person name="Zuniga M."/>
            <person name="Hartke A."/>
            <person name="Deutscher J."/>
        </authorList>
    </citation>
    <scope>NUCLEOTIDE SEQUENCE [LARGE SCALE GENOMIC DNA]</scope>
    <source>
        <strain>BL23</strain>
    </source>
</reference>
<accession>B3WEI2</accession>
<keyword id="KW-0963">Cytoplasm</keyword>
<keyword id="KW-0227">DNA damage</keyword>
<keyword id="KW-0233">DNA recombination</keyword>
<keyword id="KW-0234">DNA repair</keyword>
<keyword id="KW-0255">Endonuclease</keyword>
<keyword id="KW-0378">Hydrolase</keyword>
<keyword id="KW-0460">Magnesium</keyword>
<keyword id="KW-0479">Metal-binding</keyword>
<keyword id="KW-0540">Nuclease</keyword>